<name>PFD1_MOUSE</name>
<dbReference type="EMBL" id="AK010532">
    <property type="protein sequence ID" value="BAB27010.1"/>
    <property type="molecule type" value="mRNA"/>
</dbReference>
<dbReference type="CCDS" id="CCDS29152.1"/>
<dbReference type="SMR" id="Q9CWM4"/>
<dbReference type="FunCoup" id="Q9CWM4">
    <property type="interactions" value="1685"/>
</dbReference>
<dbReference type="STRING" id="10090.ENSMUSP00000025204"/>
<dbReference type="iPTMnet" id="Q9CWM4"/>
<dbReference type="PhosphoSitePlus" id="Q9CWM4"/>
<dbReference type="REPRODUCTION-2DPAGE" id="Q9CWM4"/>
<dbReference type="jPOST" id="Q9CWM4"/>
<dbReference type="PaxDb" id="10090-ENSMUSP00000025204"/>
<dbReference type="ProteomicsDB" id="288127"/>
<dbReference type="Pumba" id="Q9CWM4"/>
<dbReference type="AGR" id="MGI:1914449"/>
<dbReference type="MGI" id="MGI:1914449">
    <property type="gene designation" value="Pfdn1"/>
</dbReference>
<dbReference type="eggNOG" id="KOG3501">
    <property type="taxonomic scope" value="Eukaryota"/>
</dbReference>
<dbReference type="InParanoid" id="Q9CWM4"/>
<dbReference type="PhylomeDB" id="Q9CWM4"/>
<dbReference type="ChiTaRS" id="Pfdn1">
    <property type="organism name" value="mouse"/>
</dbReference>
<dbReference type="PRO" id="PR:Q9CWM4"/>
<dbReference type="Proteomes" id="UP000000589">
    <property type="component" value="Unplaced"/>
</dbReference>
<dbReference type="RNAct" id="Q9CWM4">
    <property type="molecule type" value="protein"/>
</dbReference>
<dbReference type="GO" id="GO:0005813">
    <property type="term" value="C:centrosome"/>
    <property type="evidence" value="ECO:0000314"/>
    <property type="project" value="MGI"/>
</dbReference>
<dbReference type="GO" id="GO:0016272">
    <property type="term" value="C:prefoldin complex"/>
    <property type="evidence" value="ECO:0007669"/>
    <property type="project" value="InterPro"/>
</dbReference>
<dbReference type="GO" id="GO:0051082">
    <property type="term" value="F:unfolded protein binding"/>
    <property type="evidence" value="ECO:0007669"/>
    <property type="project" value="InterPro"/>
</dbReference>
<dbReference type="GO" id="GO:0030036">
    <property type="term" value="P:actin cytoskeleton organization"/>
    <property type="evidence" value="ECO:0000315"/>
    <property type="project" value="MGI"/>
</dbReference>
<dbReference type="GO" id="GO:0042113">
    <property type="term" value="P:B cell activation"/>
    <property type="evidence" value="ECO:0000315"/>
    <property type="project" value="MGI"/>
</dbReference>
<dbReference type="GO" id="GO:0021549">
    <property type="term" value="P:cerebellum development"/>
    <property type="evidence" value="ECO:0000315"/>
    <property type="project" value="MGI"/>
</dbReference>
<dbReference type="GO" id="GO:0006457">
    <property type="term" value="P:protein folding"/>
    <property type="evidence" value="ECO:0007669"/>
    <property type="project" value="InterPro"/>
</dbReference>
<dbReference type="GO" id="GO:0021537">
    <property type="term" value="P:telencephalon development"/>
    <property type="evidence" value="ECO:0000315"/>
    <property type="project" value="MGI"/>
</dbReference>
<dbReference type="CDD" id="cd23164">
    <property type="entry name" value="Prefoldin_1"/>
    <property type="match status" value="1"/>
</dbReference>
<dbReference type="FunFam" id="1.10.287.370:FF:000006">
    <property type="entry name" value="prefoldin subunit 1"/>
    <property type="match status" value="1"/>
</dbReference>
<dbReference type="Gene3D" id="1.10.287.370">
    <property type="match status" value="1"/>
</dbReference>
<dbReference type="InterPro" id="IPR002777">
    <property type="entry name" value="PFD_beta-like"/>
</dbReference>
<dbReference type="InterPro" id="IPR009053">
    <property type="entry name" value="Prefoldin"/>
</dbReference>
<dbReference type="PANTHER" id="PTHR20903:SF0">
    <property type="entry name" value="PREFOLDIN SUBUNIT 1"/>
    <property type="match status" value="1"/>
</dbReference>
<dbReference type="PANTHER" id="PTHR20903">
    <property type="entry name" value="PREFOLDIN SUBUNIT 1-RELATED"/>
    <property type="match status" value="1"/>
</dbReference>
<dbReference type="Pfam" id="PF01920">
    <property type="entry name" value="Prefoldin_2"/>
    <property type="match status" value="1"/>
</dbReference>
<dbReference type="SUPFAM" id="SSF46579">
    <property type="entry name" value="Prefoldin"/>
    <property type="match status" value="1"/>
</dbReference>
<gene>
    <name type="primary">Pfdn1</name>
</gene>
<evidence type="ECO:0000250" key="1"/>
<evidence type="ECO:0000250" key="2">
    <source>
        <dbReference type="UniProtKB" id="O60925"/>
    </source>
</evidence>
<evidence type="ECO:0000305" key="3"/>
<proteinExistence type="evidence at protein level"/>
<protein>
    <recommendedName>
        <fullName>Prefoldin subunit 1</fullName>
    </recommendedName>
</protein>
<accession>Q9CWM4</accession>
<organism>
    <name type="scientific">Mus musculus</name>
    <name type="common">Mouse</name>
    <dbReference type="NCBI Taxonomy" id="10090"/>
    <lineage>
        <taxon>Eukaryota</taxon>
        <taxon>Metazoa</taxon>
        <taxon>Chordata</taxon>
        <taxon>Craniata</taxon>
        <taxon>Vertebrata</taxon>
        <taxon>Euteleostomi</taxon>
        <taxon>Mammalia</taxon>
        <taxon>Eutheria</taxon>
        <taxon>Euarchontoglires</taxon>
        <taxon>Glires</taxon>
        <taxon>Rodentia</taxon>
        <taxon>Myomorpha</taxon>
        <taxon>Muroidea</taxon>
        <taxon>Muridae</taxon>
        <taxon>Murinae</taxon>
        <taxon>Mus</taxon>
        <taxon>Mus</taxon>
    </lineage>
</organism>
<reference key="1">
    <citation type="journal article" date="2005" name="Science">
        <title>The transcriptional landscape of the mammalian genome.</title>
        <authorList>
            <person name="Carninci P."/>
            <person name="Kasukawa T."/>
            <person name="Katayama S."/>
            <person name="Gough J."/>
            <person name="Frith M.C."/>
            <person name="Maeda N."/>
            <person name="Oyama R."/>
            <person name="Ravasi T."/>
            <person name="Lenhard B."/>
            <person name="Wells C."/>
            <person name="Kodzius R."/>
            <person name="Shimokawa K."/>
            <person name="Bajic V.B."/>
            <person name="Brenner S.E."/>
            <person name="Batalov S."/>
            <person name="Forrest A.R."/>
            <person name="Zavolan M."/>
            <person name="Davis M.J."/>
            <person name="Wilming L.G."/>
            <person name="Aidinis V."/>
            <person name="Allen J.E."/>
            <person name="Ambesi-Impiombato A."/>
            <person name="Apweiler R."/>
            <person name="Aturaliya R.N."/>
            <person name="Bailey T.L."/>
            <person name="Bansal M."/>
            <person name="Baxter L."/>
            <person name="Beisel K.W."/>
            <person name="Bersano T."/>
            <person name="Bono H."/>
            <person name="Chalk A.M."/>
            <person name="Chiu K.P."/>
            <person name="Choudhary V."/>
            <person name="Christoffels A."/>
            <person name="Clutterbuck D.R."/>
            <person name="Crowe M.L."/>
            <person name="Dalla E."/>
            <person name="Dalrymple B.P."/>
            <person name="de Bono B."/>
            <person name="Della Gatta G."/>
            <person name="di Bernardo D."/>
            <person name="Down T."/>
            <person name="Engstrom P."/>
            <person name="Fagiolini M."/>
            <person name="Faulkner G."/>
            <person name="Fletcher C.F."/>
            <person name="Fukushima T."/>
            <person name="Furuno M."/>
            <person name="Futaki S."/>
            <person name="Gariboldi M."/>
            <person name="Georgii-Hemming P."/>
            <person name="Gingeras T.R."/>
            <person name="Gojobori T."/>
            <person name="Green R.E."/>
            <person name="Gustincich S."/>
            <person name="Harbers M."/>
            <person name="Hayashi Y."/>
            <person name="Hensch T.K."/>
            <person name="Hirokawa N."/>
            <person name="Hill D."/>
            <person name="Huminiecki L."/>
            <person name="Iacono M."/>
            <person name="Ikeo K."/>
            <person name="Iwama A."/>
            <person name="Ishikawa T."/>
            <person name="Jakt M."/>
            <person name="Kanapin A."/>
            <person name="Katoh M."/>
            <person name="Kawasawa Y."/>
            <person name="Kelso J."/>
            <person name="Kitamura H."/>
            <person name="Kitano H."/>
            <person name="Kollias G."/>
            <person name="Krishnan S.P."/>
            <person name="Kruger A."/>
            <person name="Kummerfeld S.K."/>
            <person name="Kurochkin I.V."/>
            <person name="Lareau L.F."/>
            <person name="Lazarevic D."/>
            <person name="Lipovich L."/>
            <person name="Liu J."/>
            <person name="Liuni S."/>
            <person name="McWilliam S."/>
            <person name="Madan Babu M."/>
            <person name="Madera M."/>
            <person name="Marchionni L."/>
            <person name="Matsuda H."/>
            <person name="Matsuzawa S."/>
            <person name="Miki H."/>
            <person name="Mignone F."/>
            <person name="Miyake S."/>
            <person name="Morris K."/>
            <person name="Mottagui-Tabar S."/>
            <person name="Mulder N."/>
            <person name="Nakano N."/>
            <person name="Nakauchi H."/>
            <person name="Ng P."/>
            <person name="Nilsson R."/>
            <person name="Nishiguchi S."/>
            <person name="Nishikawa S."/>
            <person name="Nori F."/>
            <person name="Ohara O."/>
            <person name="Okazaki Y."/>
            <person name="Orlando V."/>
            <person name="Pang K.C."/>
            <person name="Pavan W.J."/>
            <person name="Pavesi G."/>
            <person name="Pesole G."/>
            <person name="Petrovsky N."/>
            <person name="Piazza S."/>
            <person name="Reed J."/>
            <person name="Reid J.F."/>
            <person name="Ring B.Z."/>
            <person name="Ringwald M."/>
            <person name="Rost B."/>
            <person name="Ruan Y."/>
            <person name="Salzberg S.L."/>
            <person name="Sandelin A."/>
            <person name="Schneider C."/>
            <person name="Schoenbach C."/>
            <person name="Sekiguchi K."/>
            <person name="Semple C.A."/>
            <person name="Seno S."/>
            <person name="Sessa L."/>
            <person name="Sheng Y."/>
            <person name="Shibata Y."/>
            <person name="Shimada H."/>
            <person name="Shimada K."/>
            <person name="Silva D."/>
            <person name="Sinclair B."/>
            <person name="Sperling S."/>
            <person name="Stupka E."/>
            <person name="Sugiura K."/>
            <person name="Sultana R."/>
            <person name="Takenaka Y."/>
            <person name="Taki K."/>
            <person name="Tammoja K."/>
            <person name="Tan S.L."/>
            <person name="Tang S."/>
            <person name="Taylor M.S."/>
            <person name="Tegner J."/>
            <person name="Teichmann S.A."/>
            <person name="Ueda H.R."/>
            <person name="van Nimwegen E."/>
            <person name="Verardo R."/>
            <person name="Wei C.L."/>
            <person name="Yagi K."/>
            <person name="Yamanishi H."/>
            <person name="Zabarovsky E."/>
            <person name="Zhu S."/>
            <person name="Zimmer A."/>
            <person name="Hide W."/>
            <person name="Bult C."/>
            <person name="Grimmond S.M."/>
            <person name="Teasdale R.D."/>
            <person name="Liu E.T."/>
            <person name="Brusic V."/>
            <person name="Quackenbush J."/>
            <person name="Wahlestedt C."/>
            <person name="Mattick J.S."/>
            <person name="Hume D.A."/>
            <person name="Kai C."/>
            <person name="Sasaki D."/>
            <person name="Tomaru Y."/>
            <person name="Fukuda S."/>
            <person name="Kanamori-Katayama M."/>
            <person name="Suzuki M."/>
            <person name="Aoki J."/>
            <person name="Arakawa T."/>
            <person name="Iida J."/>
            <person name="Imamura K."/>
            <person name="Itoh M."/>
            <person name="Kato T."/>
            <person name="Kawaji H."/>
            <person name="Kawagashira N."/>
            <person name="Kawashima T."/>
            <person name="Kojima M."/>
            <person name="Kondo S."/>
            <person name="Konno H."/>
            <person name="Nakano K."/>
            <person name="Ninomiya N."/>
            <person name="Nishio T."/>
            <person name="Okada M."/>
            <person name="Plessy C."/>
            <person name="Shibata K."/>
            <person name="Shiraki T."/>
            <person name="Suzuki S."/>
            <person name="Tagami M."/>
            <person name="Waki K."/>
            <person name="Watahiki A."/>
            <person name="Okamura-Oho Y."/>
            <person name="Suzuki H."/>
            <person name="Kawai J."/>
            <person name="Hayashizaki Y."/>
        </authorList>
    </citation>
    <scope>NUCLEOTIDE SEQUENCE [LARGE SCALE MRNA]</scope>
    <source>
        <strain>C57BL/6J</strain>
        <tissue>Embryonic stem cell</tissue>
    </source>
</reference>
<reference key="2">
    <citation type="journal article" date="2010" name="Cell">
        <title>A tissue-specific atlas of mouse protein phosphorylation and expression.</title>
        <authorList>
            <person name="Huttlin E.L."/>
            <person name="Jedrychowski M.P."/>
            <person name="Elias J.E."/>
            <person name="Goswami T."/>
            <person name="Rad R."/>
            <person name="Beausoleil S.A."/>
            <person name="Villen J."/>
            <person name="Haas W."/>
            <person name="Sowa M.E."/>
            <person name="Gygi S.P."/>
        </authorList>
    </citation>
    <scope>IDENTIFICATION BY MASS SPECTROMETRY [LARGE SCALE ANALYSIS]</scope>
    <source>
        <tissue>Brain</tissue>
        <tissue>Brown adipose tissue</tissue>
        <tissue>Heart</tissue>
        <tissue>Kidney</tissue>
        <tissue>Liver</tissue>
        <tissue>Pancreas</tissue>
        <tissue>Spleen</tissue>
    </source>
</reference>
<sequence>MAASVDLELKKAFTELQAKVIDTQQKVKLADIQIEQLNRTKKHAHLTDTEIMTLVDETNMYEGVGRMFILQSKEVIHNQLLEKQKIAKEKIKELEQKKSYLERSVKEAEDNIREMLMARRAQ</sequence>
<comment type="function">
    <text evidence="1">Binds specifically to cytosolic chaperonin (c-CPN) and transfers target proteins to it. Binds to nascent polypeptide chain and promotes folding in an environment in which there are many competing pathways for nonnative proteins (By similarity).</text>
</comment>
<comment type="subunit">
    <text evidence="1">Heterohexamer of two PFD-alpha type and four PFD-beta type subunits.</text>
</comment>
<comment type="similarity">
    <text evidence="3">Belongs to the prefoldin subunit beta family.</text>
</comment>
<feature type="initiator methionine" description="Removed" evidence="2">
    <location>
        <position position="1"/>
    </location>
</feature>
<feature type="chain" id="PRO_0000124831" description="Prefoldin subunit 1">
    <location>
        <begin position="2"/>
        <end position="122"/>
    </location>
</feature>
<feature type="modified residue" description="N-acetylalanine" evidence="2">
    <location>
        <position position="2"/>
    </location>
</feature>
<keyword id="KW-0007">Acetylation</keyword>
<keyword id="KW-0143">Chaperone</keyword>
<keyword id="KW-1185">Reference proteome</keyword>